<comment type="function">
    <text evidence="3 5 6">Transports electrons between ferredoxin and NADPH (PubMed:17915950). Provides electrons to heme oxygenase (pigA) allowing anaerobic heme degradation (PubMed:17915950). Provides electrons necessary to reduce and mobilize Fe(3+) in a heterooligomeric bacterioferritin (BFR) complex to Fe(2+) (PubMed:19575528, PubMed:21574546). Reduction of Fe(3+) in a pure FtnA BFR does not require Bfd (PubMed:21574546). Reduction of Fe(3+) in a pure BfrB BFR does require Bfd (PubMed:17915950).</text>
</comment>
<comment type="catalytic activity">
    <reaction evidence="3 10">
        <text>2 reduced [2Fe-2S]-[ferredoxin] + NADP(+) + H(+) = 2 oxidized [2Fe-2S]-[ferredoxin] + NADPH</text>
        <dbReference type="Rhea" id="RHEA:20125"/>
        <dbReference type="Rhea" id="RHEA-COMP:10000"/>
        <dbReference type="Rhea" id="RHEA-COMP:10001"/>
        <dbReference type="ChEBI" id="CHEBI:15378"/>
        <dbReference type="ChEBI" id="CHEBI:33737"/>
        <dbReference type="ChEBI" id="CHEBI:33738"/>
        <dbReference type="ChEBI" id="CHEBI:57783"/>
        <dbReference type="ChEBI" id="CHEBI:58349"/>
        <dbReference type="EC" id="1.18.1.2"/>
    </reaction>
</comment>
<comment type="cofactor">
    <cofactor evidence="3 4">
        <name>FAD</name>
        <dbReference type="ChEBI" id="CHEBI:57692"/>
    </cofactor>
    <text evidence="4">FAD and NADP(+) substrate form hydrogen bonds (PubMed:18605699).</text>
</comment>
<comment type="subunit">
    <text evidence="3 4">Monomer (PubMed:17915950, PubMed:18605699).</text>
</comment>
<comment type="induction">
    <text evidence="2">Increased transcription under iron starvation (PubMed:12207696).</text>
</comment>
<comment type="similarity">
    <text evidence="9">Belongs to the ferredoxin--NADP reductase type 1 family.</text>
</comment>
<proteinExistence type="evidence at protein level"/>
<sequence>MSNLYTERVLSVHHWNDTLFSFKTTRNPGLRFKTGQFVMIGLEVDGRPLMRAYSIASPNYEEHLEFFSIKVPDGPLTSRLQHLKEGDELMVSRKPTGTLVHDDLLPGKHLYLLSTGTGMAPFLSVIQDPETYERYEKVILVHGVRWVSELAYADFITKVLPEHEYFGDQVKEKLIYYPLVTREPFRNQGRQTDLMRSGKLFEDIGLPPMNPQDDRAMICGSPSMLEETSAVLDSFGLKISPRMGEPGDYLIERAFVEK</sequence>
<name>FENR_PSEAE</name>
<reference evidence="11" key="1">
    <citation type="journal article" date="2000" name="Nature">
        <title>Complete genome sequence of Pseudomonas aeruginosa PAO1, an opportunistic pathogen.</title>
        <authorList>
            <person name="Stover C.K."/>
            <person name="Pham X.-Q.T."/>
            <person name="Erwin A.L."/>
            <person name="Mizoguchi S.D."/>
            <person name="Warrener P."/>
            <person name="Hickey M.J."/>
            <person name="Brinkman F.S.L."/>
            <person name="Hufnagle W.O."/>
            <person name="Kowalik D.J."/>
            <person name="Lagrou M."/>
            <person name="Garber R.L."/>
            <person name="Goltry L."/>
            <person name="Tolentino E."/>
            <person name="Westbrock-Wadman S."/>
            <person name="Yuan Y."/>
            <person name="Brody L.L."/>
            <person name="Coulter S.N."/>
            <person name="Folger K.R."/>
            <person name="Kas A."/>
            <person name="Larbig K."/>
            <person name="Lim R.M."/>
            <person name="Smith K.A."/>
            <person name="Spencer D.H."/>
            <person name="Wong G.K.-S."/>
            <person name="Wu Z."/>
            <person name="Paulsen I.T."/>
            <person name="Reizer J."/>
            <person name="Saier M.H. Jr."/>
            <person name="Hancock R.E.W."/>
            <person name="Lory S."/>
            <person name="Olson M.V."/>
        </authorList>
    </citation>
    <scope>NUCLEOTIDE SEQUENCE [LARGE SCALE GENOMIC DNA]</scope>
    <source>
        <strain>ATCC 15692 / DSM 22644 / CIP 104116 / JCM 14847 / LMG 12228 / 1C / PRS 101 / PAO1</strain>
    </source>
</reference>
<reference key="2">
    <citation type="journal article" date="2002" name="Mol. Microbiol.">
        <title>GeneChip expression analysis of the iron starvation response in Pseudomonas aeruginosa: identification of novel pyoverdine biosynthesis genes.</title>
        <authorList>
            <person name="Ochsner U.A."/>
            <person name="Wilderman P.J."/>
            <person name="Vasil A.I."/>
            <person name="Vasil M.L."/>
        </authorList>
    </citation>
    <scope>INDUCTION BY IRON STARVATION</scope>
    <source>
        <strain>ATCC 15692 / DSM 22644 / CIP 104116 / JCM 14847 / LMG 12228 / 1C / PRS 101 / PAO1</strain>
    </source>
</reference>
<reference key="3">
    <citation type="journal article" date="2009" name="Biochemistry">
        <title>Binding of Pseudomonas aeruginosa apobacterioferritin-associated ferredoxin to bacterioferritin B promotes heme mediation of electron delivery and mobilization of core mineral iron.</title>
        <authorList>
            <person name="Weeratunga S.K."/>
            <person name="Gee C.E."/>
            <person name="Lovell S."/>
            <person name="Zeng Y."/>
            <person name="Woodin C.L."/>
            <person name="Rivera M."/>
        </authorList>
    </citation>
    <scope>FUNCTION</scope>
</reference>
<reference key="4">
    <citation type="journal article" date="2011" name="Biochemistry">
        <title>Two distinct ferritin-like molecules in Pseudomonas aeruginosa: the product of the bfrA gene is a bacterial ferritin (FtnA) and not a bacterioferritin (Bfr).</title>
        <authorList>
            <person name="Yao H."/>
            <person name="Jepkorir G."/>
            <person name="Lovell S."/>
            <person name="Nama P.V."/>
            <person name="Weeratunga S."/>
            <person name="Battaile K.P."/>
            <person name="Rivera M."/>
        </authorList>
    </citation>
    <scope>FUNCTION</scope>
</reference>
<reference evidence="12" key="5">
    <citation type="journal article" date="2007" name="Biochemistry">
        <title>Biochemical and structural characterization of Pseudomonas aeruginosa Bfd and FPR: ferredoxin NADP+ reductase and not ferredoxin is the redox partner of heme oxygenase under iron-starvation conditions.</title>
        <authorList>
            <person name="Wang A."/>
            <person name="Zeng Y."/>
            <person name="Han H."/>
            <person name="Weeratunga S."/>
            <person name="Morgan B.N."/>
            <person name="Moenne-Loccoz P."/>
            <person name="Schonbrunn E."/>
            <person name="Rivera M."/>
        </authorList>
    </citation>
    <scope>X-RAY CRYSTALLOGRAPHY (1.55 ANGSTROMS) OF 2-258 IN COMPLEX WITH FAD</scope>
    <scope>FUNCTION</scope>
    <scope>CATALYTIC ACTIVITY</scope>
    <scope>COFACTOR</scope>
    <source>
        <strain>ATCC 15692 / DSM 22644 / CIP 104116 / JCM 14847 / LMG 12228 / 1C / PRS 101 / PAO1</strain>
    </source>
</reference>
<reference evidence="13" key="6">
    <citation type="journal article" date="2008" name="Biochemistry">
        <title>X-ray crystallographic and solution state nuclear magnetic resonance spectroscopic investigations of NADP+ binding to ferredoxin NADP reductase from Pseudomonas aeruginosa.</title>
        <authorList>
            <person name="Wang A."/>
            <person name="Rodriguez J.C."/>
            <person name="Han H."/>
            <person name="Schonbrunn E."/>
            <person name="Rivera M."/>
        </authorList>
    </citation>
    <scope>X-RAY CRYSTALLOGRAPHY (1.90 ANGSTROMS) OF 2-258 IN COMPLEX WITH FAD AND NADP(+)</scope>
    <scope>COFACTOR</scope>
</reference>
<organism>
    <name type="scientific">Pseudomonas aeruginosa (strain ATCC 15692 / DSM 22644 / CIP 104116 / JCM 14847 / LMG 12228 / 1C / PRS 101 / PAO1)</name>
    <dbReference type="NCBI Taxonomy" id="208964"/>
    <lineage>
        <taxon>Bacteria</taxon>
        <taxon>Pseudomonadati</taxon>
        <taxon>Pseudomonadota</taxon>
        <taxon>Gammaproteobacteria</taxon>
        <taxon>Pseudomonadales</taxon>
        <taxon>Pseudomonadaceae</taxon>
        <taxon>Pseudomonas</taxon>
    </lineage>
</organism>
<keyword id="KW-0002">3D-structure</keyword>
<keyword id="KW-0274">FAD</keyword>
<keyword id="KW-0285">Flavoprotein</keyword>
<keyword id="KW-0521">NADP</keyword>
<keyword id="KW-0547">Nucleotide-binding</keyword>
<keyword id="KW-0560">Oxidoreductase</keyword>
<keyword id="KW-1185">Reference proteome</keyword>
<evidence type="ECO:0000255" key="1">
    <source>
        <dbReference type="PROSITE-ProRule" id="PRU00716"/>
    </source>
</evidence>
<evidence type="ECO:0000269" key="2">
    <source>
    </source>
</evidence>
<evidence type="ECO:0000269" key="3">
    <source>
    </source>
</evidence>
<evidence type="ECO:0000269" key="4">
    <source>
    </source>
</evidence>
<evidence type="ECO:0000269" key="5">
    <source>
    </source>
</evidence>
<evidence type="ECO:0000269" key="6">
    <source>
    </source>
</evidence>
<evidence type="ECO:0000303" key="7">
    <source>
    </source>
</evidence>
<evidence type="ECO:0000303" key="8">
    <source>
    </source>
</evidence>
<evidence type="ECO:0000305" key="9"/>
<evidence type="ECO:0000305" key="10">
    <source>
    </source>
</evidence>
<evidence type="ECO:0000312" key="11">
    <source>
        <dbReference type="EMBL" id="AAG06785.1"/>
    </source>
</evidence>
<evidence type="ECO:0007744" key="12">
    <source>
        <dbReference type="PDB" id="2QDX"/>
    </source>
</evidence>
<evidence type="ECO:0007744" key="13">
    <source>
        <dbReference type="PDB" id="3CRZ"/>
    </source>
</evidence>
<evidence type="ECO:0007829" key="14">
    <source>
        <dbReference type="PDB" id="2QDX"/>
    </source>
</evidence>
<accession>Q9HYK7</accession>
<protein>
    <recommendedName>
        <fullName evidence="9">Ferredoxin--NADP reductase</fullName>
        <shortName evidence="9">FNR</shortName>
        <ecNumber evidence="3">1.18.1.2</ecNumber>
    </recommendedName>
    <alternativeName>
        <fullName evidence="8">Ferredoxin--NADP(+) reductase</fullName>
        <shortName evidence="8">FPR</shortName>
    </alternativeName>
</protein>
<gene>
    <name evidence="7" type="primary">fpr</name>
    <name evidence="11" type="ordered locus">PA3397</name>
</gene>
<feature type="chain" id="PRO_0000460761" description="Ferredoxin--NADP reductase">
    <location>
        <begin position="1"/>
        <end position="258"/>
    </location>
</feature>
<feature type="domain" description="FAD-binding FR-type" evidence="1">
    <location>
        <begin position="2"/>
        <end position="102"/>
    </location>
</feature>
<feature type="binding site" evidence="3 4 12 13">
    <location>
        <position position="51"/>
    </location>
    <ligand>
        <name>FAD</name>
        <dbReference type="ChEBI" id="CHEBI:57692"/>
    </ligand>
</feature>
<feature type="binding site" evidence="3 4 12 13">
    <location>
        <position position="52"/>
    </location>
    <ligand>
        <name>FAD</name>
        <dbReference type="ChEBI" id="CHEBI:57692"/>
    </ligand>
</feature>
<feature type="binding site" evidence="3 4 12 13">
    <location>
        <position position="53"/>
    </location>
    <ligand>
        <name>FAD</name>
        <dbReference type="ChEBI" id="CHEBI:57692"/>
    </ligand>
</feature>
<feature type="binding site" evidence="3 4 12 13">
    <location>
        <position position="54"/>
    </location>
    <ligand>
        <name>FAD</name>
        <dbReference type="ChEBI" id="CHEBI:57692"/>
    </ligand>
</feature>
<feature type="binding site" evidence="3 4 12 13">
    <location>
        <position position="67"/>
    </location>
    <ligand>
        <name>FAD</name>
        <dbReference type="ChEBI" id="CHEBI:57692"/>
    </ligand>
</feature>
<feature type="binding site" evidence="3 4 12 13">
    <location>
        <position position="69"/>
    </location>
    <ligand>
        <name>FAD</name>
        <dbReference type="ChEBI" id="CHEBI:57692"/>
    </ligand>
</feature>
<feature type="binding site" evidence="3 4 12 13">
    <location>
        <position position="76"/>
    </location>
    <ligand>
        <name>FAD</name>
        <dbReference type="ChEBI" id="CHEBI:57692"/>
    </ligand>
</feature>
<feature type="binding site" evidence="3 4 12 13">
    <location>
        <position position="77"/>
    </location>
    <ligand>
        <name>FAD</name>
        <dbReference type="ChEBI" id="CHEBI:57692"/>
    </ligand>
</feature>
<feature type="binding site" evidence="3 4 12 13">
    <location>
        <position position="117"/>
    </location>
    <ligand>
        <name>FAD</name>
        <dbReference type="ChEBI" id="CHEBI:57692"/>
    </ligand>
</feature>
<feature type="binding site" evidence="13">
    <location>
        <position position="144"/>
    </location>
    <ligand>
        <name>NADP(+)</name>
        <dbReference type="ChEBI" id="CHEBI:58349"/>
    </ligand>
</feature>
<feature type="binding site" evidence="4 13">
    <location>
        <position position="145"/>
    </location>
    <ligand>
        <name>NADP(+)</name>
        <dbReference type="ChEBI" id="CHEBI:58349"/>
    </ligand>
</feature>
<feature type="binding site" evidence="4 13">
    <location>
        <position position="181"/>
    </location>
    <ligand>
        <name>NADP(+)</name>
        <dbReference type="ChEBI" id="CHEBI:58349"/>
    </ligand>
</feature>
<feature type="binding site" evidence="4 13">
    <location>
        <position position="182"/>
    </location>
    <ligand>
        <name>NADP(+)</name>
        <dbReference type="ChEBI" id="CHEBI:58349"/>
    </ligand>
</feature>
<feature type="binding site" evidence="4 13">
    <location>
        <position position="190"/>
    </location>
    <ligand>
        <name>NADP(+)</name>
        <dbReference type="ChEBI" id="CHEBI:58349"/>
    </ligand>
</feature>
<feature type="binding site" evidence="4 13">
    <location>
        <position position="223"/>
    </location>
    <ligand>
        <name>NADP(+)</name>
        <dbReference type="ChEBI" id="CHEBI:58349"/>
    </ligand>
</feature>
<feature type="binding site" evidence="4 13">
    <location>
        <position position="227"/>
    </location>
    <ligand>
        <name>NADP(+)</name>
        <dbReference type="ChEBI" id="CHEBI:58349"/>
    </ligand>
</feature>
<feature type="binding site" evidence="3 4 12 13">
    <location>
        <position position="255"/>
    </location>
    <ligand>
        <name>FAD</name>
        <dbReference type="ChEBI" id="CHEBI:57692"/>
    </ligand>
</feature>
<feature type="binding site" evidence="4 13">
    <location>
        <position position="255"/>
    </location>
    <ligand>
        <name>NADP(+)</name>
        <dbReference type="ChEBI" id="CHEBI:58349"/>
    </ligand>
</feature>
<feature type="binding site" evidence="3 4 12 13">
    <location>
        <position position="257"/>
    </location>
    <ligand>
        <name>FAD</name>
        <dbReference type="ChEBI" id="CHEBI:57692"/>
    </ligand>
</feature>
<feature type="binding site" evidence="4 13">
    <location>
        <position position="257"/>
    </location>
    <ligand>
        <name>NADP(+)</name>
        <dbReference type="ChEBI" id="CHEBI:58349"/>
    </ligand>
</feature>
<feature type="binding site" evidence="3 4 12 13">
    <location>
        <position position="258"/>
    </location>
    <ligand>
        <name>FAD</name>
        <dbReference type="ChEBI" id="CHEBI:57692"/>
    </ligand>
</feature>
<feature type="strand" evidence="14">
    <location>
        <begin position="4"/>
        <end position="16"/>
    </location>
</feature>
<feature type="strand" evidence="14">
    <location>
        <begin position="19"/>
        <end position="25"/>
    </location>
</feature>
<feature type="strand" evidence="14">
    <location>
        <begin position="37"/>
        <end position="44"/>
    </location>
</feature>
<feature type="strand" evidence="14">
    <location>
        <begin position="47"/>
        <end position="54"/>
    </location>
</feature>
<feature type="strand" evidence="14">
    <location>
        <begin position="61"/>
        <end position="69"/>
    </location>
</feature>
<feature type="helix" evidence="14">
    <location>
        <begin position="77"/>
        <end position="80"/>
    </location>
</feature>
<feature type="strand" evidence="14">
    <location>
        <begin position="88"/>
        <end position="91"/>
    </location>
</feature>
<feature type="helix" evidence="14">
    <location>
        <begin position="101"/>
        <end position="103"/>
    </location>
</feature>
<feature type="strand" evidence="14">
    <location>
        <begin position="108"/>
        <end position="115"/>
    </location>
</feature>
<feature type="helix" evidence="14">
    <location>
        <begin position="116"/>
        <end position="119"/>
    </location>
</feature>
<feature type="helix" evidence="14">
    <location>
        <begin position="120"/>
        <end position="125"/>
    </location>
</feature>
<feature type="helix" evidence="14">
    <location>
        <begin position="129"/>
        <end position="134"/>
    </location>
</feature>
<feature type="strand" evidence="14">
    <location>
        <begin position="136"/>
        <end position="146"/>
    </location>
</feature>
<feature type="helix" evidence="14">
    <location>
        <begin position="147"/>
        <end position="149"/>
    </location>
</feature>
<feature type="helix" evidence="14">
    <location>
        <begin position="153"/>
        <end position="157"/>
    </location>
</feature>
<feature type="helix" evidence="14">
    <location>
        <begin position="160"/>
        <end position="162"/>
    </location>
</feature>
<feature type="turn" evidence="14">
    <location>
        <begin position="164"/>
        <end position="166"/>
    </location>
</feature>
<feature type="helix" evidence="14">
    <location>
        <begin position="167"/>
        <end position="173"/>
    </location>
</feature>
<feature type="strand" evidence="14">
    <location>
        <begin position="174"/>
        <end position="183"/>
    </location>
</feature>
<feature type="strand" evidence="14">
    <location>
        <begin position="186"/>
        <end position="189"/>
    </location>
</feature>
<feature type="helix" evidence="14">
    <location>
        <begin position="191"/>
        <end position="197"/>
    </location>
</feature>
<feature type="helix" evidence="14">
    <location>
        <begin position="199"/>
        <end position="204"/>
    </location>
</feature>
<feature type="turn" evidence="14">
    <location>
        <begin position="211"/>
        <end position="213"/>
    </location>
</feature>
<feature type="strand" evidence="14">
    <location>
        <begin position="214"/>
        <end position="220"/>
    </location>
</feature>
<feature type="helix" evidence="14">
    <location>
        <begin position="222"/>
        <end position="234"/>
    </location>
</feature>
<feature type="strand" evidence="14">
    <location>
        <begin position="247"/>
        <end position="254"/>
    </location>
</feature>
<dbReference type="EC" id="1.18.1.2" evidence="3"/>
<dbReference type="EMBL" id="AE004091">
    <property type="protein sequence ID" value="AAG06785.1"/>
    <property type="molecule type" value="Genomic_DNA"/>
</dbReference>
<dbReference type="PIR" id="B83220">
    <property type="entry name" value="B83220"/>
</dbReference>
<dbReference type="RefSeq" id="NP_252087.1">
    <property type="nucleotide sequence ID" value="NC_002516.2"/>
</dbReference>
<dbReference type="RefSeq" id="WP_003091832.1">
    <property type="nucleotide sequence ID" value="NZ_QZGE01000017.1"/>
</dbReference>
<dbReference type="PDB" id="2QDX">
    <property type="method" value="X-ray"/>
    <property type="resolution" value="1.55 A"/>
    <property type="chains" value="A=2-258"/>
</dbReference>
<dbReference type="PDB" id="3CRZ">
    <property type="method" value="X-ray"/>
    <property type="resolution" value="1.90 A"/>
    <property type="chains" value="A=2-258"/>
</dbReference>
<dbReference type="PDBsum" id="2QDX"/>
<dbReference type="PDBsum" id="3CRZ"/>
<dbReference type="SMR" id="Q9HYK7"/>
<dbReference type="FunCoup" id="Q9HYK7">
    <property type="interactions" value="92"/>
</dbReference>
<dbReference type="STRING" id="208964.PA3397"/>
<dbReference type="PaxDb" id="208964-PA3397"/>
<dbReference type="GeneID" id="879913"/>
<dbReference type="KEGG" id="pae:PA3397"/>
<dbReference type="PATRIC" id="fig|208964.12.peg.3556"/>
<dbReference type="PseudoCAP" id="PA3397"/>
<dbReference type="HOGENOM" id="CLU_003827_3_0_6"/>
<dbReference type="InParanoid" id="Q9HYK7"/>
<dbReference type="OrthoDB" id="9784483at2"/>
<dbReference type="PhylomeDB" id="Q9HYK7"/>
<dbReference type="BioCyc" id="PAER208964:G1FZ6-3463-MONOMER"/>
<dbReference type="EvolutionaryTrace" id="Q9HYK7"/>
<dbReference type="Proteomes" id="UP000002438">
    <property type="component" value="Chromosome"/>
</dbReference>
<dbReference type="GO" id="GO:0004324">
    <property type="term" value="F:ferredoxin-NADP+ reductase activity"/>
    <property type="evidence" value="ECO:0007669"/>
    <property type="project" value="UniProtKB-EC"/>
</dbReference>
<dbReference type="GO" id="GO:0000166">
    <property type="term" value="F:nucleotide binding"/>
    <property type="evidence" value="ECO:0007669"/>
    <property type="project" value="UniProtKB-KW"/>
</dbReference>
<dbReference type="GO" id="GO:0034599">
    <property type="term" value="P:cellular response to oxidative stress"/>
    <property type="evidence" value="ECO:0000318"/>
    <property type="project" value="GO_Central"/>
</dbReference>
<dbReference type="GO" id="GO:0042167">
    <property type="term" value="P:heme catabolic process"/>
    <property type="evidence" value="ECO:0000314"/>
    <property type="project" value="PseudoCAP"/>
</dbReference>
<dbReference type="CDD" id="cd06195">
    <property type="entry name" value="FNR1"/>
    <property type="match status" value="1"/>
</dbReference>
<dbReference type="FunFam" id="3.40.50.80:FF:000002">
    <property type="entry name" value="Ferredoxin--NADP reductase"/>
    <property type="match status" value="1"/>
</dbReference>
<dbReference type="FunFam" id="2.40.30.10:FF:000018">
    <property type="entry name" value="Ferredoxin--NADP(+) reductase"/>
    <property type="match status" value="1"/>
</dbReference>
<dbReference type="Gene3D" id="3.40.50.80">
    <property type="entry name" value="Nucleotide-binding domain of ferredoxin-NADP reductase (FNR) module"/>
    <property type="match status" value="1"/>
</dbReference>
<dbReference type="Gene3D" id="2.40.30.10">
    <property type="entry name" value="Translation factors"/>
    <property type="match status" value="1"/>
</dbReference>
<dbReference type="InterPro" id="IPR008333">
    <property type="entry name" value="Cbr1-like_FAD-bd_dom"/>
</dbReference>
<dbReference type="InterPro" id="IPR017927">
    <property type="entry name" value="FAD-bd_FR_type"/>
</dbReference>
<dbReference type="InterPro" id="IPR001709">
    <property type="entry name" value="Flavoprot_Pyr_Nucl_cyt_Rdtase"/>
</dbReference>
<dbReference type="InterPro" id="IPR033892">
    <property type="entry name" value="FNR_bac"/>
</dbReference>
<dbReference type="InterPro" id="IPR039261">
    <property type="entry name" value="FNR_nucleotide-bd"/>
</dbReference>
<dbReference type="InterPro" id="IPR051930">
    <property type="entry name" value="FNR_type-1"/>
</dbReference>
<dbReference type="InterPro" id="IPR001433">
    <property type="entry name" value="OxRdtase_FAD/NAD-bd"/>
</dbReference>
<dbReference type="InterPro" id="IPR017938">
    <property type="entry name" value="Riboflavin_synthase-like_b-brl"/>
</dbReference>
<dbReference type="PANTHER" id="PTHR47878:SF1">
    <property type="entry name" value="FLAVODOXIN_FERREDOXIN--NADP REDUCTASE"/>
    <property type="match status" value="1"/>
</dbReference>
<dbReference type="PANTHER" id="PTHR47878">
    <property type="entry name" value="OXIDOREDUCTASE FAD/NAD(P)-BINDING DOMAIN PROTEIN"/>
    <property type="match status" value="1"/>
</dbReference>
<dbReference type="Pfam" id="PF00970">
    <property type="entry name" value="FAD_binding_6"/>
    <property type="match status" value="1"/>
</dbReference>
<dbReference type="Pfam" id="PF00175">
    <property type="entry name" value="NAD_binding_1"/>
    <property type="match status" value="1"/>
</dbReference>
<dbReference type="PRINTS" id="PR00371">
    <property type="entry name" value="FPNCR"/>
</dbReference>
<dbReference type="SUPFAM" id="SSF52343">
    <property type="entry name" value="Ferredoxin reductase-like, C-terminal NADP-linked domain"/>
    <property type="match status" value="1"/>
</dbReference>
<dbReference type="SUPFAM" id="SSF63380">
    <property type="entry name" value="Riboflavin synthase domain-like"/>
    <property type="match status" value="1"/>
</dbReference>
<dbReference type="PROSITE" id="PS51384">
    <property type="entry name" value="FAD_FR"/>
    <property type="match status" value="1"/>
</dbReference>